<name>LLDD_PSEAE</name>
<organism>
    <name type="scientific">Pseudomonas aeruginosa (strain ATCC 15692 / DSM 22644 / CIP 104116 / JCM 14847 / LMG 12228 / 1C / PRS 101 / PAO1)</name>
    <dbReference type="NCBI Taxonomy" id="208964"/>
    <lineage>
        <taxon>Bacteria</taxon>
        <taxon>Pseudomonadati</taxon>
        <taxon>Pseudomonadota</taxon>
        <taxon>Gammaproteobacteria</taxon>
        <taxon>Pseudomonadales</taxon>
        <taxon>Pseudomonadaceae</taxon>
        <taxon>Pseudomonas</taxon>
    </lineage>
</organism>
<evidence type="ECO:0000255" key="1">
    <source>
        <dbReference type="HAMAP-Rule" id="MF_01559"/>
    </source>
</evidence>
<sequence length="381" mass="41122">MIISASTDYRAAAQRKLPPFLFHYIDGGAYAEYTLRRNVEDLSAIALRQRVLKNMSELSLETRLFDETLAMPVALAPVGLTGMYARRGEVQAARAAAAKGVPFTLSTVSVCPIEEVAPAIDRPMWFQLYVLKDRGFMRNALERAKAAGVTTLVFTVDMPVPGARYRDAHSGMSGPYAAPRRILQAMTHPAWAWDVGLLGKPHDLGNISAYRGNPTGLEDYIGWLGANFDPSISWKDLEWIREFWDGPMVIKGILDPEDARDAVKFGADGIVVSNHGGRQLDGVLSSARALPAIADAVKGELAILADSGIRTGLDVVRMIALGADSVLLGRAFVYALAAAGEAGVRNLLELIEKEMRVAMVLTGAKSIGEISADSLVRELGA</sequence>
<feature type="chain" id="PRO_0000206341" description="L-lactate dehydrogenase">
    <location>
        <begin position="1"/>
        <end position="381"/>
    </location>
</feature>
<feature type="domain" description="FMN hydroxy acid dehydrogenase" evidence="1">
    <location>
        <begin position="1"/>
        <end position="380"/>
    </location>
</feature>
<feature type="active site" description="Proton acceptor" evidence="1">
    <location>
        <position position="275"/>
    </location>
</feature>
<feature type="binding site" evidence="1">
    <location>
        <position position="24"/>
    </location>
    <ligand>
        <name>substrate</name>
    </ligand>
</feature>
<feature type="binding site" evidence="1">
    <location>
        <position position="106"/>
    </location>
    <ligand>
        <name>FMN</name>
        <dbReference type="ChEBI" id="CHEBI:58210"/>
    </ligand>
</feature>
<feature type="binding site" evidence="1">
    <location>
        <position position="127"/>
    </location>
    <ligand>
        <name>FMN</name>
        <dbReference type="ChEBI" id="CHEBI:58210"/>
    </ligand>
</feature>
<feature type="binding site" evidence="1">
    <location>
        <position position="129"/>
    </location>
    <ligand>
        <name>substrate</name>
    </ligand>
</feature>
<feature type="binding site" evidence="1">
    <location>
        <position position="155"/>
    </location>
    <ligand>
        <name>FMN</name>
        <dbReference type="ChEBI" id="CHEBI:58210"/>
    </ligand>
</feature>
<feature type="binding site" evidence="1">
    <location>
        <position position="164"/>
    </location>
    <ligand>
        <name>substrate</name>
    </ligand>
</feature>
<feature type="binding site" evidence="1">
    <location>
        <position position="251"/>
    </location>
    <ligand>
        <name>FMN</name>
        <dbReference type="ChEBI" id="CHEBI:58210"/>
    </ligand>
</feature>
<feature type="binding site" evidence="1">
    <location>
        <position position="278"/>
    </location>
    <ligand>
        <name>substrate</name>
    </ligand>
</feature>
<feature type="binding site" evidence="1">
    <location>
        <begin position="306"/>
        <end position="330"/>
    </location>
    <ligand>
        <name>FMN</name>
        <dbReference type="ChEBI" id="CHEBI:58210"/>
    </ligand>
</feature>
<proteinExistence type="inferred from homology"/>
<keyword id="KW-0997">Cell inner membrane</keyword>
<keyword id="KW-1003">Cell membrane</keyword>
<keyword id="KW-0285">Flavoprotein</keyword>
<keyword id="KW-0288">FMN</keyword>
<keyword id="KW-0472">Membrane</keyword>
<keyword id="KW-0560">Oxidoreductase</keyword>
<keyword id="KW-1185">Reference proteome</keyword>
<protein>
    <recommendedName>
        <fullName evidence="1">L-lactate dehydrogenase</fullName>
        <ecNumber evidence="1">1.1.-.-</ecNumber>
    </recommendedName>
</protein>
<comment type="function">
    <text evidence="1">Catalyzes the conversion of L-lactate to pyruvate. Is coupled to the respiratory chain.</text>
</comment>
<comment type="catalytic activity">
    <reaction evidence="1">
        <text>(S)-lactate + A = pyruvate + AH2</text>
        <dbReference type="Rhea" id="RHEA:45816"/>
        <dbReference type="ChEBI" id="CHEBI:13193"/>
        <dbReference type="ChEBI" id="CHEBI:15361"/>
        <dbReference type="ChEBI" id="CHEBI:16651"/>
        <dbReference type="ChEBI" id="CHEBI:17499"/>
    </reaction>
</comment>
<comment type="cofactor">
    <cofactor evidence="1">
        <name>FMN</name>
        <dbReference type="ChEBI" id="CHEBI:58210"/>
    </cofactor>
</comment>
<comment type="subunit">
    <text evidence="1">Homotetramer.</text>
</comment>
<comment type="subcellular location">
    <subcellularLocation>
        <location evidence="1">Cell inner membrane</location>
        <topology evidence="1">Peripheral membrane protein</topology>
    </subcellularLocation>
</comment>
<comment type="similarity">
    <text evidence="1">Belongs to the FMN-dependent alpha-hydroxy acid dehydrogenase family.</text>
</comment>
<reference key="1">
    <citation type="journal article" date="2000" name="Nature">
        <title>Complete genome sequence of Pseudomonas aeruginosa PAO1, an opportunistic pathogen.</title>
        <authorList>
            <person name="Stover C.K."/>
            <person name="Pham X.-Q.T."/>
            <person name="Erwin A.L."/>
            <person name="Mizoguchi S.D."/>
            <person name="Warrener P."/>
            <person name="Hickey M.J."/>
            <person name="Brinkman F.S.L."/>
            <person name="Hufnagle W.O."/>
            <person name="Kowalik D.J."/>
            <person name="Lagrou M."/>
            <person name="Garber R.L."/>
            <person name="Goltry L."/>
            <person name="Tolentino E."/>
            <person name="Westbrock-Wadman S."/>
            <person name="Yuan Y."/>
            <person name="Brody L.L."/>
            <person name="Coulter S.N."/>
            <person name="Folger K.R."/>
            <person name="Kas A."/>
            <person name="Larbig K."/>
            <person name="Lim R.M."/>
            <person name="Smith K.A."/>
            <person name="Spencer D.H."/>
            <person name="Wong G.K.-S."/>
            <person name="Wu Z."/>
            <person name="Paulsen I.T."/>
            <person name="Reizer J."/>
            <person name="Saier M.H. Jr."/>
            <person name="Hancock R.E.W."/>
            <person name="Lory S."/>
            <person name="Olson M.V."/>
        </authorList>
    </citation>
    <scope>NUCLEOTIDE SEQUENCE [LARGE SCALE GENOMIC DNA]</scope>
    <source>
        <strain>ATCC 15692 / DSM 22644 / CIP 104116 / JCM 14847 / LMG 12228 / 1C / PRS 101 / PAO1</strain>
    </source>
</reference>
<accession>Q9HV37</accession>
<gene>
    <name evidence="1" type="primary">lldD</name>
    <name type="ordered locus">PA4771</name>
</gene>
<dbReference type="EC" id="1.1.-.-" evidence="1"/>
<dbReference type="EMBL" id="AE004091">
    <property type="protein sequence ID" value="AAG08157.1"/>
    <property type="molecule type" value="Genomic_DNA"/>
</dbReference>
<dbReference type="PIR" id="G83050">
    <property type="entry name" value="G83050"/>
</dbReference>
<dbReference type="RefSeq" id="NP_253459.1">
    <property type="nucleotide sequence ID" value="NC_002516.2"/>
</dbReference>
<dbReference type="RefSeq" id="WP_003100494.1">
    <property type="nucleotide sequence ID" value="NZ_QZGE01000018.1"/>
</dbReference>
<dbReference type="SMR" id="Q9HV37"/>
<dbReference type="FunCoup" id="Q9HV37">
    <property type="interactions" value="345"/>
</dbReference>
<dbReference type="STRING" id="208964.PA4771"/>
<dbReference type="PaxDb" id="208964-PA4771"/>
<dbReference type="DNASU" id="881809"/>
<dbReference type="GeneID" id="881809"/>
<dbReference type="KEGG" id="pae:PA4771"/>
<dbReference type="PATRIC" id="fig|208964.12.peg.4998"/>
<dbReference type="PseudoCAP" id="PA4771"/>
<dbReference type="HOGENOM" id="CLU_020639_0_0_6"/>
<dbReference type="InParanoid" id="Q9HV37"/>
<dbReference type="OrthoDB" id="9770452at2"/>
<dbReference type="PhylomeDB" id="Q9HV37"/>
<dbReference type="BioCyc" id="PAER208964:G1FZ6-4884-MONOMER"/>
<dbReference type="BRENDA" id="1.1.2.3">
    <property type="organism ID" value="5087"/>
</dbReference>
<dbReference type="Proteomes" id="UP000002438">
    <property type="component" value="Chromosome"/>
</dbReference>
<dbReference type="GO" id="GO:0005886">
    <property type="term" value="C:plasma membrane"/>
    <property type="evidence" value="ECO:0000318"/>
    <property type="project" value="GO_Central"/>
</dbReference>
<dbReference type="GO" id="GO:0010181">
    <property type="term" value="F:FMN binding"/>
    <property type="evidence" value="ECO:0007669"/>
    <property type="project" value="InterPro"/>
</dbReference>
<dbReference type="GO" id="GO:0004459">
    <property type="term" value="F:L-lactate dehydrogenase activity"/>
    <property type="evidence" value="ECO:0000318"/>
    <property type="project" value="GO_Central"/>
</dbReference>
<dbReference type="GO" id="GO:0009060">
    <property type="term" value="P:aerobic respiration"/>
    <property type="evidence" value="ECO:0000318"/>
    <property type="project" value="GO_Central"/>
</dbReference>
<dbReference type="GO" id="GO:0006089">
    <property type="term" value="P:lactate metabolic process"/>
    <property type="evidence" value="ECO:0007669"/>
    <property type="project" value="UniProtKB-UniRule"/>
</dbReference>
<dbReference type="CDD" id="cd02809">
    <property type="entry name" value="alpha_hydroxyacid_oxid_FMN"/>
    <property type="match status" value="1"/>
</dbReference>
<dbReference type="FunFam" id="3.20.20.70:FF:000029">
    <property type="entry name" value="L-lactate dehydrogenase"/>
    <property type="match status" value="1"/>
</dbReference>
<dbReference type="Gene3D" id="3.20.20.70">
    <property type="entry name" value="Aldolase class I"/>
    <property type="match status" value="1"/>
</dbReference>
<dbReference type="HAMAP" id="MF_01559">
    <property type="entry name" value="L_lact_dehydr"/>
    <property type="match status" value="1"/>
</dbReference>
<dbReference type="InterPro" id="IPR013785">
    <property type="entry name" value="Aldolase_TIM"/>
</dbReference>
<dbReference type="InterPro" id="IPR012133">
    <property type="entry name" value="Alpha-hydoxy_acid_DH_FMN"/>
</dbReference>
<dbReference type="InterPro" id="IPR000262">
    <property type="entry name" value="FMN-dep_DH"/>
</dbReference>
<dbReference type="InterPro" id="IPR037396">
    <property type="entry name" value="FMN_HAD"/>
</dbReference>
<dbReference type="InterPro" id="IPR008259">
    <property type="entry name" value="FMN_hydac_DH_AS"/>
</dbReference>
<dbReference type="InterPro" id="IPR020920">
    <property type="entry name" value="LldD"/>
</dbReference>
<dbReference type="NCBIfam" id="NF033901">
    <property type="entry name" value="L_lactate_LldD"/>
    <property type="match status" value="1"/>
</dbReference>
<dbReference type="NCBIfam" id="NF008398">
    <property type="entry name" value="PRK11197.1"/>
    <property type="match status" value="1"/>
</dbReference>
<dbReference type="PANTHER" id="PTHR10578:SF85">
    <property type="entry name" value="L-LACTATE DEHYDROGENASE"/>
    <property type="match status" value="1"/>
</dbReference>
<dbReference type="PANTHER" id="PTHR10578">
    <property type="entry name" value="S -2-HYDROXY-ACID OXIDASE-RELATED"/>
    <property type="match status" value="1"/>
</dbReference>
<dbReference type="Pfam" id="PF01070">
    <property type="entry name" value="FMN_dh"/>
    <property type="match status" value="1"/>
</dbReference>
<dbReference type="PIRSF" id="PIRSF000138">
    <property type="entry name" value="Al-hdrx_acd_dh"/>
    <property type="match status" value="1"/>
</dbReference>
<dbReference type="SUPFAM" id="SSF51395">
    <property type="entry name" value="FMN-linked oxidoreductases"/>
    <property type="match status" value="1"/>
</dbReference>
<dbReference type="PROSITE" id="PS00557">
    <property type="entry name" value="FMN_HYDROXY_ACID_DH_1"/>
    <property type="match status" value="1"/>
</dbReference>
<dbReference type="PROSITE" id="PS51349">
    <property type="entry name" value="FMN_HYDROXY_ACID_DH_2"/>
    <property type="match status" value="1"/>
</dbReference>